<feature type="chain" id="PRO_0000459013" description="Tryptophan 6-halogenase ThaL">
    <location>
        <begin position="1"/>
        <end position="531"/>
    </location>
</feature>
<feature type="active site" evidence="14 15">
    <location>
        <position position="79"/>
    </location>
</feature>
<feature type="binding site" evidence="5 6 22 23 27">
    <location>
        <position position="13"/>
    </location>
    <ligand>
        <name>FAD</name>
        <dbReference type="ChEBI" id="CHEBI:57692"/>
    </ligand>
</feature>
<feature type="binding site" evidence="6 27">
    <location>
        <position position="15"/>
    </location>
    <ligand>
        <name>FAD</name>
        <dbReference type="ChEBI" id="CHEBI:57692"/>
    </ligand>
</feature>
<feature type="binding site" evidence="5 6 22 23 27">
    <location>
        <position position="16"/>
    </location>
    <ligand>
        <name>FAD</name>
        <dbReference type="ChEBI" id="CHEBI:57692"/>
    </ligand>
</feature>
<feature type="binding site" evidence="5 22">
    <location>
        <position position="39"/>
    </location>
    <ligand>
        <name>FAD</name>
        <dbReference type="ChEBI" id="CHEBI:57692"/>
    </ligand>
</feature>
<feature type="binding site" evidence="5 6 22 23 27">
    <location>
        <position position="42"/>
    </location>
    <ligand>
        <name>FAD</name>
        <dbReference type="ChEBI" id="CHEBI:57692"/>
    </ligand>
</feature>
<feature type="binding site" evidence="5 6 22 23 27">
    <location>
        <position position="45"/>
    </location>
    <ligand>
        <name>FAD</name>
        <dbReference type="ChEBI" id="CHEBI:57692"/>
    </ligand>
</feature>
<feature type="binding site" evidence="5 22 23">
    <location>
        <position position="47"/>
    </location>
    <ligand>
        <name>FAD</name>
        <dbReference type="ChEBI" id="CHEBI:57692"/>
    </ligand>
</feature>
<feature type="binding site" evidence="5 6 22 23 27">
    <location>
        <position position="50"/>
    </location>
    <ligand>
        <name>FAD</name>
        <dbReference type="ChEBI" id="CHEBI:57692"/>
    </ligand>
</feature>
<feature type="binding site" evidence="4 5 6 20 23 26">
    <location>
        <position position="111"/>
    </location>
    <ligand>
        <name>L-tryptophan</name>
        <dbReference type="ChEBI" id="CHEBI:57912"/>
    </ligand>
</feature>
<feature type="binding site" evidence="5 6 22 23 27">
    <location>
        <position position="198"/>
    </location>
    <ligand>
        <name>FAD</name>
        <dbReference type="ChEBI" id="CHEBI:57692"/>
    </ligand>
</feature>
<feature type="binding site" evidence="5 6 22 23 27">
    <location>
        <position position="349"/>
    </location>
    <ligand>
        <name>FAD</name>
        <dbReference type="ChEBI" id="CHEBI:57692"/>
    </ligand>
</feature>
<feature type="binding site" evidence="1">
    <location>
        <position position="360"/>
    </location>
    <ligand>
        <name>chloride</name>
        <dbReference type="ChEBI" id="CHEBI:17996"/>
    </ligand>
</feature>
<feature type="binding site" evidence="1">
    <location>
        <position position="361"/>
    </location>
    <ligand>
        <name>chloride</name>
        <dbReference type="ChEBI" id="CHEBI:17996"/>
    </ligand>
</feature>
<feature type="binding site" evidence="5 6 22 23 27">
    <location>
        <position position="362"/>
    </location>
    <ligand>
        <name>FAD</name>
        <dbReference type="ChEBI" id="CHEBI:57692"/>
    </ligand>
</feature>
<feature type="binding site" evidence="4 5 6 20 23 26">
    <location>
        <position position="454"/>
    </location>
    <ligand>
        <name>L-tryptophan</name>
        <dbReference type="ChEBI" id="CHEBI:57912"/>
    </ligand>
</feature>
<feature type="binding site" evidence="4 5 6 20 23 26">
    <location>
        <position position="455"/>
    </location>
    <ligand>
        <name>L-tryptophan</name>
        <dbReference type="ChEBI" id="CHEBI:57912"/>
    </ligand>
</feature>
<feature type="binding site" evidence="4 5 6 20 23 26">
    <location>
        <position position="461"/>
    </location>
    <ligand>
        <name>L-tryptophan</name>
        <dbReference type="ChEBI" id="CHEBI:57912"/>
    </ligand>
</feature>
<feature type="binding site" evidence="4 5 6 20 23 26">
    <location>
        <position position="465"/>
    </location>
    <ligand>
        <name>L-tryptophan</name>
        <dbReference type="ChEBI" id="CHEBI:57912"/>
    </ligand>
</feature>
<feature type="site" description="Important for activity" evidence="2">
    <location>
        <position position="358"/>
    </location>
</feature>
<feature type="mutagenesis site" description="In Thal-RebH5; regioselectivity of chlorination and bromination is almost completely switched from C6 to C7; when associated with I-82; T-360; S-469 and N-470." evidence="4">
    <original>V</original>
    <variation>I</variation>
    <location>
        <position position="52"/>
    </location>
</feature>
<feature type="mutagenesis site" description="Loss of halogenase activity." evidence="6">
    <original>K</original>
    <variation>T</variation>
    <location>
        <position position="79"/>
    </location>
</feature>
<feature type="mutagenesis site" description="In Thal-RebH5; regioselectivity of chlorination and bromination is almost completely switched from C6 to C7; when associated with I-52; T-360; S-469 and N-470." evidence="4">
    <original>V</original>
    <variation>I</variation>
    <location>
        <position position="82"/>
    </location>
</feature>
<feature type="mutagenesis site" description="In Thal-RebH5; regioselectivity of chlorination and bromination is almost completely switched from C6 to C7; when associated with I-52; I-82; S-469 and N-470." evidence="4">
    <original>S</original>
    <variation>T</variation>
    <location>
        <position position="360"/>
    </location>
</feature>
<feature type="mutagenesis site" description="In Thal-RebH5; regioselectivity of chlorination and bromination is almost completely switched from C6 to C7; when associated with I-52; I-82; T-360 and N-470." evidence="4">
    <original>G</original>
    <variation>S</variation>
    <location>
        <position position="469"/>
    </location>
</feature>
<feature type="mutagenesis site" description="In Thal-RebH5; regioselectivity of chlorination and bromination is almost completely switched from C6 to C7; when associated with I-52; I-82; T-360 and S-469." evidence="4">
    <original>S</original>
    <variation>N</variation>
    <location>
        <position position="470"/>
    </location>
</feature>
<feature type="strand" evidence="32">
    <location>
        <begin position="7"/>
        <end position="11"/>
    </location>
</feature>
<feature type="helix" evidence="32">
    <location>
        <begin position="14"/>
        <end position="27"/>
    </location>
</feature>
<feature type="turn" evidence="32">
    <location>
        <begin position="28"/>
        <end position="30"/>
    </location>
</feature>
<feature type="strand" evidence="32">
    <location>
        <begin position="31"/>
        <end position="37"/>
    </location>
</feature>
<feature type="helix" evidence="32">
    <location>
        <begin position="55"/>
        <end position="58"/>
    </location>
</feature>
<feature type="helix" evidence="32">
    <location>
        <begin position="60"/>
        <end position="63"/>
    </location>
</feature>
<feature type="helix" evidence="32">
    <location>
        <begin position="67"/>
        <end position="73"/>
    </location>
</feature>
<feature type="strand" evidence="32">
    <location>
        <begin position="77"/>
        <end position="79"/>
    </location>
</feature>
<feature type="strand" evidence="32">
    <location>
        <begin position="81"/>
        <end position="89"/>
    </location>
</feature>
<feature type="strand" evidence="32">
    <location>
        <begin position="105"/>
        <end position="111"/>
    </location>
</feature>
<feature type="helix" evidence="32">
    <location>
        <begin position="123"/>
        <end position="132"/>
    </location>
</feature>
<feature type="helix" evidence="32">
    <location>
        <begin position="140"/>
        <end position="144"/>
    </location>
</feature>
<feature type="helix" evidence="32">
    <location>
        <begin position="146"/>
        <end position="152"/>
    </location>
</feature>
<feature type="strand" evidence="32">
    <location>
        <begin position="169"/>
        <end position="172"/>
    </location>
</feature>
<feature type="helix" evidence="32">
    <location>
        <begin position="174"/>
        <end position="188"/>
    </location>
</feature>
<feature type="strand" evidence="32">
    <location>
        <begin position="192"/>
        <end position="194"/>
    </location>
</feature>
<feature type="strand" evidence="32">
    <location>
        <begin position="198"/>
        <end position="203"/>
    </location>
</feature>
<feature type="strand" evidence="32">
    <location>
        <begin position="209"/>
        <end position="214"/>
    </location>
</feature>
<feature type="strand" evidence="32">
    <location>
        <begin position="219"/>
        <end position="221"/>
    </location>
</feature>
<feature type="strand" evidence="32">
    <location>
        <begin position="223"/>
        <end position="227"/>
    </location>
</feature>
<feature type="helix" evidence="34">
    <location>
        <begin position="230"/>
        <end position="232"/>
    </location>
</feature>
<feature type="helix" evidence="32">
    <location>
        <begin position="234"/>
        <end position="239"/>
    </location>
</feature>
<feature type="strand" evidence="32">
    <location>
        <begin position="244"/>
        <end position="246"/>
    </location>
</feature>
<feature type="turn" evidence="32">
    <location>
        <begin position="248"/>
        <end position="250"/>
    </location>
</feature>
<feature type="strand" evidence="32">
    <location>
        <begin position="255"/>
        <end position="262"/>
    </location>
</feature>
<feature type="helix" evidence="32">
    <location>
        <begin position="265"/>
        <end position="268"/>
    </location>
</feature>
<feature type="strand" evidence="32">
    <location>
        <begin position="272"/>
        <end position="278"/>
    </location>
</feature>
<feature type="strand" evidence="32">
    <location>
        <begin position="280"/>
        <end position="289"/>
    </location>
</feature>
<feature type="strand" evidence="32">
    <location>
        <begin position="292"/>
        <end position="299"/>
    </location>
</feature>
<feature type="turn" evidence="32">
    <location>
        <begin position="301"/>
        <end position="303"/>
    </location>
</feature>
<feature type="helix" evidence="32">
    <location>
        <begin position="306"/>
        <end position="317"/>
    </location>
</feature>
<feature type="helix" evidence="33">
    <location>
        <begin position="321"/>
        <end position="323"/>
    </location>
</feature>
<feature type="strand" evidence="32">
    <location>
        <begin position="327"/>
        <end position="330"/>
    </location>
</feature>
<feature type="strand" evidence="32">
    <location>
        <begin position="334"/>
        <end position="337"/>
    </location>
</feature>
<feature type="strand" evidence="32">
    <location>
        <begin position="339"/>
        <end position="341"/>
    </location>
</feature>
<feature type="strand" evidence="32">
    <location>
        <begin position="344"/>
        <end position="346"/>
    </location>
</feature>
<feature type="helix" evidence="32">
    <location>
        <begin position="348"/>
        <end position="350"/>
    </location>
</feature>
<feature type="strand" evidence="35">
    <location>
        <begin position="356"/>
        <end position="358"/>
    </location>
</feature>
<feature type="helix" evidence="32">
    <location>
        <begin position="361"/>
        <end position="374"/>
    </location>
</feature>
<feature type="helix" evidence="32">
    <location>
        <begin position="383"/>
        <end position="409"/>
    </location>
</feature>
<feature type="helix" evidence="32">
    <location>
        <begin position="417"/>
        <end position="422"/>
    </location>
</feature>
<feature type="helix" evidence="32">
    <location>
        <begin position="429"/>
        <end position="439"/>
    </location>
</feature>
<feature type="helix" evidence="32">
    <location>
        <begin position="451"/>
        <end position="455"/>
    </location>
</feature>
<feature type="helix" evidence="32">
    <location>
        <begin position="458"/>
        <end position="463"/>
    </location>
</feature>
<feature type="strand" evidence="31">
    <location>
        <begin position="464"/>
        <end position="466"/>
    </location>
</feature>
<feature type="helix" evidence="32">
    <location>
        <begin position="468"/>
        <end position="478"/>
    </location>
</feature>
<feature type="helix" evidence="32">
    <location>
        <begin position="487"/>
        <end position="491"/>
    </location>
</feature>
<feature type="helix" evidence="32">
    <location>
        <begin position="493"/>
        <end position="516"/>
    </location>
</feature>
<feature type="helix" evidence="32">
    <location>
        <begin position="520"/>
        <end position="528"/>
    </location>
</feature>
<keyword id="KW-0002">3D-structure</keyword>
<keyword id="KW-0274">FAD</keyword>
<keyword id="KW-0285">Flavoprotein</keyword>
<keyword id="KW-0547">Nucleotide-binding</keyword>
<keyword id="KW-0560">Oxidoreductase</keyword>
<protein>
    <recommendedName>
        <fullName evidence="10">Tryptophan 6-halogenase ThaL</fullName>
        <shortName evidence="12">Trp 6-halogenase</shortName>
        <ecNumber evidence="6 13">1.14.19.59</ecNumber>
    </recommendedName>
    <alternativeName>
        <fullName evidence="9">FADH(2)-dependent tryptophan 6-halogenase</fullName>
    </alternativeName>
</protein>
<reference evidence="16" key="1">
    <citation type="submission" date="2006-10" db="EMBL/GenBank/DDBJ databases">
        <title>A flavin-dependent tryptophan 6-halogenase and its use in modification of pyrrolnitrin biosynthesis.</title>
        <authorList>
            <person name="Seibold C."/>
            <person name="Schnerr H."/>
            <person name="Rumpf J."/>
            <person name="Kunzendorf A."/>
            <person name="Hatscher C."/>
            <person name="Wage T."/>
            <person name="Ernyei A.J."/>
            <person name="Dong C."/>
            <person name="Naismith J.H."/>
            <person name="van Pee K.-H."/>
        </authorList>
    </citation>
    <scope>NUCLEOTIDE SEQUENCE [GENOMIC DNA]</scope>
    <source>
        <strain>MJ286-76/F7</strain>
    </source>
</reference>
<reference evidence="17 18" key="2">
    <citation type="journal article" date="2014" name="ChemBioChem">
        <title>A tryptophan 6-halogenase and an amidotransferase are involved in thienodolin biosynthesis.</title>
        <authorList>
            <person name="Milbredt D."/>
            <person name="Patallo E.P."/>
            <person name="van Pee K.H."/>
        </authorList>
    </citation>
    <scope>NUCLEOTIDE SEQUENCE [GENOMIC DNA]</scope>
    <scope>FUNCTION</scope>
    <scope>DISRUPTION PHENOTYPE</scope>
    <source>
        <strain>MJ286-76F7</strain>
    </source>
</reference>
<reference evidence="19 20 21" key="3">
    <citation type="journal article" date="2019" name="J. Biol. Chem.">
        <title>Structure-based switch of regioselectivity in the flavin-dependent tryptophan 6-halogenase Thal.</title>
        <authorList>
            <person name="Moritzer A.C."/>
            <person name="Minges H."/>
            <person name="Prior T."/>
            <person name="Frese M."/>
            <person name="Sewald N."/>
            <person name="Niemann H.H."/>
        </authorList>
    </citation>
    <scope>X-RAY CRYSTALLOGRAPHY (2.12 ANGSTROMS) OF 2-531 OF WILD-TYPE IN COMPLEX WITH TRYPTOPHAN AND OF MUTANT THAL-REBH5</scope>
    <scope>SUBUNIT</scope>
    <scope>DOMAIN</scope>
    <scope>ACTIVE SITE</scope>
    <scope>MUTAGENESIS OF VAL-52; VAL-82; SER-360; GLY-469 AND SER-470</scope>
</reference>
<reference evidence="22 23" key="4">
    <citation type="journal article" date="2019" name="Protein Sci.">
        <title>Binding of FAD and tryptophan to the tryptophan 6-halogenase Thal is negatively coupled.</title>
        <authorList>
            <person name="Moritzer A.C."/>
            <person name="Niemann H.H."/>
        </authorList>
    </citation>
    <scope>X-RAY CRYSTALLOGRAPHY (2.32 ANGSTROMS) OF 2-531 IN COMPLEXES WITH FAD AND TRYPTOPHAN</scope>
    <scope>SUBUNIT</scope>
    <scope>DOMAIN</scope>
</reference>
<reference evidence="24 25" key="5">
    <citation type="journal article" date="2020" name="Crystals">
        <title>Not cleaving the His-tag of Thal results in more tightly packed and better-diffracting crystals.</title>
        <authorList>
            <person name="Moritzer A.C."/>
            <person name="Prior T."/>
            <person name="Niemann H.H."/>
        </authorList>
    </citation>
    <scope>X-RAY CRYSTALLOGRAPHY (1.63 ANGSTROMS) OF N-TERMINALLY HIS-TAGGED THAL-REBH5 MUTANT</scope>
    <scope>SUBUNIT</scope>
</reference>
<reference evidence="26 27 28" key="6">
    <citation type="journal article" date="2021" name="J. Biol. Chem.">
        <title>Dissecting the low catalytic capability of flavin-dependent halogenases.</title>
        <authorList>
            <person name="Phintha A."/>
            <person name="Prakinee K."/>
            <person name="Jaruwat A."/>
            <person name="Lawan N."/>
            <person name="Visitsatthawong S."/>
            <person name="Kantiwiriyawanitch C."/>
            <person name="Songsungthong W."/>
            <person name="Trisrivirat D."/>
            <person name="Chenprakhon P."/>
            <person name="Mulholland A."/>
            <person name="van Pee K.H."/>
            <person name="Chitnumsub P."/>
            <person name="Chaiyen P."/>
        </authorList>
    </citation>
    <scope>X-RAY CRYSTALLOGRAPHY (1.91 ANGSTROMS) IN COMPLEXES WITH FAD AND TRYPTOPHAN</scope>
    <scope>FUNCTION</scope>
    <scope>CATALYTIC ACTIVITY</scope>
    <scope>PROPOSED REACTION MECHANISM</scope>
    <scope>ACTIVE SITE</scope>
    <scope>MUTAGENESIS OF LYS-79</scope>
</reference>
<reference evidence="29 30" key="7">
    <citation type="journal article" date="2023" name="ChemBioChem">
        <title>Enzymatic late-stage halogenation of peptides.</title>
        <authorList>
            <person name="Schnepel C."/>
            <person name="Moritzer A.C."/>
            <person name="Gafe S."/>
            <person name="Montua N."/>
            <person name="Minges H."/>
            <person name="Niess A."/>
            <person name="Niemann H.H."/>
            <person name="Sewald N."/>
        </authorList>
    </citation>
    <scope>X-RAY CRYSTALLOGRAPHY (2.33 ANGSTROMS) OF 2-531 IN COMPLEXES WITH D-TRYPTOPHAN AND A DIPEPTIDE</scope>
    <scope>FUNCTION</scope>
</reference>
<evidence type="ECO:0000250" key="1">
    <source>
        <dbReference type="UniProtKB" id="E9P162"/>
    </source>
</evidence>
<evidence type="ECO:0000250" key="2">
    <source>
        <dbReference type="UniProtKB" id="P95480"/>
    </source>
</evidence>
<evidence type="ECO:0000269" key="3">
    <source>
    </source>
</evidence>
<evidence type="ECO:0000269" key="4">
    <source>
    </source>
</evidence>
<evidence type="ECO:0000269" key="5">
    <source>
    </source>
</evidence>
<evidence type="ECO:0000269" key="6">
    <source>
    </source>
</evidence>
<evidence type="ECO:0000269" key="7">
    <source>
    </source>
</evidence>
<evidence type="ECO:0000269" key="8">
    <source ref="5"/>
</evidence>
<evidence type="ECO:0000303" key="9">
    <source>
    </source>
</evidence>
<evidence type="ECO:0000303" key="10">
    <source>
    </source>
</evidence>
<evidence type="ECO:0000303" key="11">
    <source ref="1"/>
</evidence>
<evidence type="ECO:0000305" key="12"/>
<evidence type="ECO:0000305" key="13">
    <source>
    </source>
</evidence>
<evidence type="ECO:0000305" key="14">
    <source>
    </source>
</evidence>
<evidence type="ECO:0000305" key="15">
    <source>
    </source>
</evidence>
<evidence type="ECO:0000312" key="16">
    <source>
        <dbReference type="EMBL" id="ABK79936.1"/>
    </source>
</evidence>
<evidence type="ECO:0000312" key="17">
    <source>
        <dbReference type="EMBL" id="AGF50179.1"/>
    </source>
</evidence>
<evidence type="ECO:0000312" key="18">
    <source>
        <dbReference type="EMBL" id="ANW12118.1"/>
    </source>
</evidence>
<evidence type="ECO:0007744" key="19">
    <source>
        <dbReference type="PDB" id="6H43"/>
    </source>
</evidence>
<evidence type="ECO:0007744" key="20">
    <source>
        <dbReference type="PDB" id="6H44"/>
    </source>
</evidence>
<evidence type="ECO:0007744" key="21">
    <source>
        <dbReference type="PDB" id="6IB5"/>
    </source>
</evidence>
<evidence type="ECO:0007744" key="22">
    <source>
        <dbReference type="PDB" id="6SLS"/>
    </source>
</evidence>
<evidence type="ECO:0007744" key="23">
    <source>
        <dbReference type="PDB" id="6SLT"/>
    </source>
</evidence>
<evidence type="ECO:0007744" key="24">
    <source>
        <dbReference type="PDB" id="7AQU"/>
    </source>
</evidence>
<evidence type="ECO:0007744" key="25">
    <source>
        <dbReference type="PDB" id="7AQV"/>
    </source>
</evidence>
<evidence type="ECO:0007744" key="26">
    <source>
        <dbReference type="PDB" id="7CU0"/>
    </source>
</evidence>
<evidence type="ECO:0007744" key="27">
    <source>
        <dbReference type="PDB" id="7CU1"/>
    </source>
</evidence>
<evidence type="ECO:0007744" key="28">
    <source>
        <dbReference type="PDB" id="7CU2"/>
    </source>
</evidence>
<evidence type="ECO:0007744" key="29">
    <source>
        <dbReference type="PDB" id="8AD7"/>
    </source>
</evidence>
<evidence type="ECO:0007744" key="30">
    <source>
        <dbReference type="PDB" id="8AD8"/>
    </source>
</evidence>
<evidence type="ECO:0007829" key="31">
    <source>
        <dbReference type="PDB" id="6H43"/>
    </source>
</evidence>
<evidence type="ECO:0007829" key="32">
    <source>
        <dbReference type="PDB" id="7AQU"/>
    </source>
</evidence>
<evidence type="ECO:0007829" key="33">
    <source>
        <dbReference type="PDB" id="7AQV"/>
    </source>
</evidence>
<evidence type="ECO:0007829" key="34">
    <source>
        <dbReference type="PDB" id="7CU1"/>
    </source>
</evidence>
<evidence type="ECO:0007829" key="35">
    <source>
        <dbReference type="PDB" id="8AD8"/>
    </source>
</evidence>
<accession>A1E280</accession>
<comment type="function">
    <text evidence="3 6 7">Involved in the biosynthesis of thienodolin, a plant growth-regulating compound (PubMed:24692213). Catalyzes the chlorination of tryptophan (Trp) at C6 position to yield 6-chloro-tryptophan (PubMed:24692213, PubMed:33465708). It is also able to use bromide ions to generate monobrominated Trp (PubMed:33465708, PubMed:36259362). In vitro, accepts a wide range of amides and peptides carrying either L- or D-Trp at the N-terminus (PubMed:36259362).</text>
</comment>
<comment type="catalytic activity">
    <reaction evidence="6 13">
        <text>L-tryptophan + FADH2 + chloride + O2 = 6-chloro-L-tryptophan + FAD + 2 H2O</text>
        <dbReference type="Rhea" id="RHEA:55900"/>
        <dbReference type="ChEBI" id="CHEBI:15377"/>
        <dbReference type="ChEBI" id="CHEBI:15379"/>
        <dbReference type="ChEBI" id="CHEBI:17996"/>
        <dbReference type="ChEBI" id="CHEBI:57692"/>
        <dbReference type="ChEBI" id="CHEBI:57912"/>
        <dbReference type="ChEBI" id="CHEBI:58307"/>
        <dbReference type="ChEBI" id="CHEBI:139335"/>
        <dbReference type="EC" id="1.14.19.59"/>
    </reaction>
    <physiologicalReaction direction="left-to-right" evidence="13">
        <dbReference type="Rhea" id="RHEA:55901"/>
    </physiologicalReaction>
</comment>
<comment type="catalytic activity">
    <reaction evidence="6">
        <text>D-tryptophan + FADH2 + chloride + O2 = 6-chloro-D-tryptophan + FAD + 2 H2O</text>
        <dbReference type="Rhea" id="RHEA:56528"/>
        <dbReference type="ChEBI" id="CHEBI:15377"/>
        <dbReference type="ChEBI" id="CHEBI:15379"/>
        <dbReference type="ChEBI" id="CHEBI:17996"/>
        <dbReference type="ChEBI" id="CHEBI:57692"/>
        <dbReference type="ChEBI" id="CHEBI:57719"/>
        <dbReference type="ChEBI" id="CHEBI:58307"/>
        <dbReference type="ChEBI" id="CHEBI:140509"/>
        <dbReference type="EC" id="1.14.19.59"/>
    </reaction>
</comment>
<comment type="subunit">
    <text evidence="4 5 8">Homodimer (PubMed:30559288, PubMed:31589794, Ref.5). Monomer in solution (Ref.5).</text>
</comment>
<comment type="domain">
    <text evidence="4 5">Binding of tryptophan induces structural changes (PubMed:30559288). Binding of substrate to the halogenase reduces the affinity for the oxidized cofactor FAD presumably to facilitate the regeneration of FADH(2) by flavin reductases (PubMed:31589794).</text>
</comment>
<comment type="disruption phenotype">
    <text evidence="3">Deletion mutant cannot produce thienodolin (PubMed:24692213). Thienodolin production is restored when the mutant is cultured in the presence of 6-chloro-tryptophan (PubMed:24692213).</text>
</comment>
<comment type="miscellaneous">
    <text evidence="6">The reaction between FADH(2), Cl(-) and O(2) produces hypochlorous acid (HOCl), a powerful oxidant (PubMed:33465708). Unlike the mechanism previously proposed for the tryptophan 7-halogenase RebH (AC Q8KHZ8), which suggests the formation of a chloramine intermediate with a conserved lysine, Phintha et al. propose that the conserved lysine likely protonates HOCl during the halogenation reaction (PubMed:33465708).</text>
</comment>
<comment type="similarity">
    <text evidence="12">Belongs to the flavin-dependent halogenase family. Bacterial tryptophan halogenase subfamily.</text>
</comment>
<name>TRP6H_STRAO</name>
<dbReference type="EC" id="1.14.19.59" evidence="6 13"/>
<dbReference type="EMBL" id="EF095207">
    <property type="protein sequence ID" value="ABK79936.1"/>
    <property type="molecule type" value="Genomic_DNA"/>
</dbReference>
<dbReference type="EMBL" id="KC182553">
    <property type="protein sequence ID" value="AGF50179.1"/>
    <property type="molecule type" value="Genomic_DNA"/>
</dbReference>
<dbReference type="EMBL" id="KU569241">
    <property type="protein sequence ID" value="ANW12118.1"/>
    <property type="molecule type" value="Genomic_DNA"/>
</dbReference>
<dbReference type="PDB" id="6H43">
    <property type="method" value="X-ray"/>
    <property type="resolution" value="2.20 A"/>
    <property type="chains" value="A/B=2-531"/>
</dbReference>
<dbReference type="PDB" id="6H44">
    <property type="method" value="X-ray"/>
    <property type="resolution" value="2.55 A"/>
    <property type="chains" value="A/B=2-531"/>
</dbReference>
<dbReference type="PDB" id="6IB5">
    <property type="method" value="X-ray"/>
    <property type="resolution" value="2.12 A"/>
    <property type="chains" value="A/B=2-531"/>
</dbReference>
<dbReference type="PDB" id="6SLS">
    <property type="method" value="X-ray"/>
    <property type="resolution" value="2.32 A"/>
    <property type="chains" value="A/B=2-531"/>
</dbReference>
<dbReference type="PDB" id="6SLT">
    <property type="method" value="X-ray"/>
    <property type="resolution" value="2.70 A"/>
    <property type="chains" value="A/B=2-531"/>
</dbReference>
<dbReference type="PDB" id="7AQU">
    <property type="method" value="X-ray"/>
    <property type="resolution" value="1.63 A"/>
    <property type="chains" value="A/B=1-531"/>
</dbReference>
<dbReference type="PDB" id="7AQV">
    <property type="method" value="X-ray"/>
    <property type="resolution" value="1.84 A"/>
    <property type="chains" value="A/B=1-531"/>
</dbReference>
<dbReference type="PDB" id="7CU0">
    <property type="method" value="X-ray"/>
    <property type="resolution" value="1.95 A"/>
    <property type="chains" value="A/B=1-531"/>
</dbReference>
<dbReference type="PDB" id="7CU1">
    <property type="method" value="X-ray"/>
    <property type="resolution" value="1.91 A"/>
    <property type="chains" value="A/B=1-531"/>
</dbReference>
<dbReference type="PDB" id="7CU2">
    <property type="method" value="X-ray"/>
    <property type="resolution" value="2.40 A"/>
    <property type="chains" value="A/B=1-531"/>
</dbReference>
<dbReference type="PDB" id="8AD7">
    <property type="method" value="X-ray"/>
    <property type="resolution" value="2.33 A"/>
    <property type="chains" value="A/B=2-531"/>
</dbReference>
<dbReference type="PDB" id="8AD8">
    <property type="method" value="X-ray"/>
    <property type="resolution" value="2.95 A"/>
    <property type="chains" value="A/B=2-531"/>
</dbReference>
<dbReference type="PDBsum" id="6H43"/>
<dbReference type="PDBsum" id="6H44"/>
<dbReference type="PDBsum" id="6IB5"/>
<dbReference type="PDBsum" id="6SLS"/>
<dbReference type="PDBsum" id="6SLT"/>
<dbReference type="PDBsum" id="7AQU"/>
<dbReference type="PDBsum" id="7AQV"/>
<dbReference type="PDBsum" id="7CU0"/>
<dbReference type="PDBsum" id="7CU1"/>
<dbReference type="PDBsum" id="7CU2"/>
<dbReference type="PDBsum" id="8AD7"/>
<dbReference type="PDBsum" id="8AD8"/>
<dbReference type="SMR" id="A1E280"/>
<dbReference type="KEGG" id="ag:AGF50179"/>
<dbReference type="BRENDA" id="1.14.19.59">
    <property type="organism ID" value="15531"/>
</dbReference>
<dbReference type="GO" id="GO:0004497">
    <property type="term" value="F:monooxygenase activity"/>
    <property type="evidence" value="ECO:0007669"/>
    <property type="project" value="InterPro"/>
</dbReference>
<dbReference type="GO" id="GO:0000166">
    <property type="term" value="F:nucleotide binding"/>
    <property type="evidence" value="ECO:0007669"/>
    <property type="project" value="UniProtKB-KW"/>
</dbReference>
<dbReference type="Gene3D" id="3.50.50.60">
    <property type="entry name" value="FAD/NAD(P)-binding domain"/>
    <property type="match status" value="1"/>
</dbReference>
<dbReference type="InterPro" id="IPR036188">
    <property type="entry name" value="FAD/NAD-bd_sf"/>
</dbReference>
<dbReference type="InterPro" id="IPR050816">
    <property type="entry name" value="Flavin-dep_Halogenase_NPB"/>
</dbReference>
<dbReference type="InterPro" id="IPR006905">
    <property type="entry name" value="Flavin_halogenase"/>
</dbReference>
<dbReference type="InterPro" id="IPR033856">
    <property type="entry name" value="Trp_halogen"/>
</dbReference>
<dbReference type="PANTHER" id="PTHR43747">
    <property type="entry name" value="FAD-BINDING PROTEIN"/>
    <property type="match status" value="1"/>
</dbReference>
<dbReference type="PANTHER" id="PTHR43747:SF4">
    <property type="entry name" value="FLAVIN-DEPENDENT TRYPTOPHAN HALOGENASE"/>
    <property type="match status" value="1"/>
</dbReference>
<dbReference type="Pfam" id="PF04820">
    <property type="entry name" value="Trp_halogenase"/>
    <property type="match status" value="1"/>
</dbReference>
<dbReference type="PIRSF" id="PIRSF011396">
    <property type="entry name" value="Trp_halogenase"/>
    <property type="match status" value="1"/>
</dbReference>
<dbReference type="SUPFAM" id="SSF51905">
    <property type="entry name" value="FAD/NAD(P)-binding domain"/>
    <property type="match status" value="1"/>
</dbReference>
<gene>
    <name evidence="11" type="primary">thaL</name>
    <name evidence="9" type="synonym">thdH</name>
</gene>
<organism>
    <name type="scientific">Streptomyces albogriseolus</name>
    <dbReference type="NCBI Taxonomy" id="1887"/>
    <lineage>
        <taxon>Bacteria</taxon>
        <taxon>Bacillati</taxon>
        <taxon>Actinomycetota</taxon>
        <taxon>Actinomycetes</taxon>
        <taxon>Kitasatosporales</taxon>
        <taxon>Streptomycetaceae</taxon>
        <taxon>Streptomyces</taxon>
        <taxon>Streptomyces albogriseolus group</taxon>
    </lineage>
</organism>
<proteinExistence type="evidence at protein level"/>
<sequence length="531" mass="60020">MDNRIKTVVILGGGTAGWMTAAYLGKALQNTVKIVVLEAPTIPRIGVGEATVPNLQRAFFDYLGIPEEEWMRECNASYKMAVKFINWRTPGEGSPDPRTLDDGHTDTFHHPFGLLPSADQIPLSHYWAAKRLQGETDENFDEACFADTAIMNAKKAPRFLDMRRATNYAWHFDASKVAAFLRNFAVTKQAVEHVEDEMTEVLTDERGFITALRTKSGRILQGDLFVDCSGFRGLLINKAMEEPFIDMSDHLLCNSAVATAVPHDDEKNGVEPYTSSIAMEAGWTWKIPMLGRFGSGHVYSDHFATQDEATLAFSKLWGLDPDNTEFNHVRFRVGRNRRAWVRNCVSVGLASCFVEPLESSGIYFIYAAIHMLAKHFPDKTFDKVLVDRFNREIEEMFDDTRDFLQAHYYFSPRVDTPFWRANKELKLADSIKDKVETYRAGLPVNLPVTDEGTYYGNFEAEFRNFWTNGSYYCIFAGLGLMPRNPLPALAYKPQSIAEAELLFADVKRKGDTLVESLPSTYDLLRQLHGAS</sequence>